<accession>A9MWQ5</accession>
<proteinExistence type="inferred from homology"/>
<dbReference type="EMBL" id="CP000886">
    <property type="protein sequence ID" value="ABX66908.1"/>
    <property type="molecule type" value="Genomic_DNA"/>
</dbReference>
<dbReference type="RefSeq" id="WP_000028507.1">
    <property type="nucleotide sequence ID" value="NC_010102.1"/>
</dbReference>
<dbReference type="KEGG" id="spq:SPAB_01510"/>
<dbReference type="PATRIC" id="fig|1016998.12.peg.1418"/>
<dbReference type="HOGENOM" id="CLU_073287_0_0_6"/>
<dbReference type="BioCyc" id="SENT1016998:SPAB_RS06140-MONOMER"/>
<dbReference type="Proteomes" id="UP000008556">
    <property type="component" value="Chromosome"/>
</dbReference>
<dbReference type="GO" id="GO:0005886">
    <property type="term" value="C:plasma membrane"/>
    <property type="evidence" value="ECO:0007669"/>
    <property type="project" value="UniProtKB-SubCell"/>
</dbReference>
<dbReference type="HAMAP" id="MF_01067">
    <property type="entry name" value="UPF0259"/>
    <property type="match status" value="1"/>
</dbReference>
<dbReference type="InterPro" id="IPR009627">
    <property type="entry name" value="UPF0259"/>
</dbReference>
<dbReference type="NCBIfam" id="NF002774">
    <property type="entry name" value="PRK02868.1"/>
    <property type="match status" value="1"/>
</dbReference>
<dbReference type="Pfam" id="PF06790">
    <property type="entry name" value="UPF0259"/>
    <property type="match status" value="1"/>
</dbReference>
<comment type="subcellular location">
    <subcellularLocation>
        <location evidence="1">Cell inner membrane</location>
        <topology evidence="1">Multi-pass membrane protein</topology>
    </subcellularLocation>
</comment>
<comment type="similarity">
    <text evidence="1">Belongs to the UPF0259 family.</text>
</comment>
<gene>
    <name evidence="1" type="primary">yciC</name>
    <name type="ordered locus">SPAB_01510</name>
</gene>
<feature type="chain" id="PRO_1000084491" description="UPF0259 membrane protein YciC">
    <location>
        <begin position="1"/>
        <end position="247"/>
    </location>
</feature>
<feature type="transmembrane region" description="Helical" evidence="1">
    <location>
        <begin position="20"/>
        <end position="40"/>
    </location>
</feature>
<feature type="transmembrane region" description="Helical" evidence="1">
    <location>
        <begin position="87"/>
        <end position="107"/>
    </location>
</feature>
<feature type="transmembrane region" description="Helical" evidence="1">
    <location>
        <begin position="118"/>
        <end position="140"/>
    </location>
</feature>
<feature type="transmembrane region" description="Helical" evidence="1">
    <location>
        <begin position="152"/>
        <end position="172"/>
    </location>
</feature>
<feature type="transmembrane region" description="Helical" evidence="1">
    <location>
        <begin position="194"/>
        <end position="214"/>
    </location>
</feature>
<feature type="transmembrane region" description="Helical" evidence="1">
    <location>
        <begin position="219"/>
        <end position="239"/>
    </location>
</feature>
<keyword id="KW-0997">Cell inner membrane</keyword>
<keyword id="KW-1003">Cell membrane</keyword>
<keyword id="KW-0472">Membrane</keyword>
<keyword id="KW-0812">Transmembrane</keyword>
<keyword id="KW-1133">Transmembrane helix</keyword>
<protein>
    <recommendedName>
        <fullName evidence="1">UPF0259 membrane protein YciC</fullName>
    </recommendedName>
</protein>
<organism>
    <name type="scientific">Salmonella paratyphi B (strain ATCC BAA-1250 / SPB7)</name>
    <dbReference type="NCBI Taxonomy" id="1016998"/>
    <lineage>
        <taxon>Bacteria</taxon>
        <taxon>Pseudomonadati</taxon>
        <taxon>Pseudomonadota</taxon>
        <taxon>Gammaproteobacteria</taxon>
        <taxon>Enterobacterales</taxon>
        <taxon>Enterobacteriaceae</taxon>
        <taxon>Salmonella</taxon>
    </lineage>
</organism>
<sequence length="247" mass="26371">MSITAKSVYRDAGNFFRNQFITILLVSLLCAFITVVLGHAFSPSDAQIAQLSEGEHLAGSAGLFELVQNMTPEQQQILLRASAASTFSGLIGNAILAGGIILMIQLVSAGHRVSALRAIGASAPALPKLFILIFLTTLLVQIGIMLIVVPGIIMAIVLALAPVMLVEEKMGVFAAMRSSMRLAWANMRLVAPAVIGWLLAKTLLLLFAPSFAVLTPNVGAVLANTLSNLISAVLLIYLFRLYMLIRQ</sequence>
<reference key="1">
    <citation type="submission" date="2007-11" db="EMBL/GenBank/DDBJ databases">
        <authorList>
            <consortium name="The Salmonella enterica serovar Paratyphi B Genome Sequencing Project"/>
            <person name="McClelland M."/>
            <person name="Sanderson E.K."/>
            <person name="Porwollik S."/>
            <person name="Spieth J."/>
            <person name="Clifton W.S."/>
            <person name="Fulton R."/>
            <person name="Cordes M."/>
            <person name="Wollam A."/>
            <person name="Shah N."/>
            <person name="Pepin K."/>
            <person name="Bhonagiri V."/>
            <person name="Nash W."/>
            <person name="Johnson M."/>
            <person name="Thiruvilangam P."/>
            <person name="Wilson R."/>
        </authorList>
    </citation>
    <scope>NUCLEOTIDE SEQUENCE [LARGE SCALE GENOMIC DNA]</scope>
    <source>
        <strain>ATCC BAA-1250 / SPB7</strain>
    </source>
</reference>
<evidence type="ECO:0000255" key="1">
    <source>
        <dbReference type="HAMAP-Rule" id="MF_01067"/>
    </source>
</evidence>
<name>YCIC_SALPB</name>